<dbReference type="EC" id="2.3.2.18"/>
<dbReference type="EMBL" id="BA000017">
    <property type="protein sequence ID" value="BAB57537.1"/>
    <property type="molecule type" value="Genomic_DNA"/>
</dbReference>
<dbReference type="RefSeq" id="WP_000673098.1">
    <property type="nucleotide sequence ID" value="NC_002758.2"/>
</dbReference>
<dbReference type="SMR" id="P0A0A6"/>
<dbReference type="KEGG" id="sav:SAV1375"/>
<dbReference type="HOGENOM" id="CLU_048411_1_0_9"/>
<dbReference type="PhylomeDB" id="P0A0A6"/>
<dbReference type="Proteomes" id="UP000002481">
    <property type="component" value="Chromosome"/>
</dbReference>
<dbReference type="GO" id="GO:0005737">
    <property type="term" value="C:cytoplasm"/>
    <property type="evidence" value="ECO:0007669"/>
    <property type="project" value="UniProtKB-SubCell"/>
</dbReference>
<dbReference type="GO" id="GO:0016755">
    <property type="term" value="F:aminoacyltransferase activity"/>
    <property type="evidence" value="ECO:0007669"/>
    <property type="project" value="InterPro"/>
</dbReference>
<dbReference type="GO" id="GO:0071555">
    <property type="term" value="P:cell wall organization"/>
    <property type="evidence" value="ECO:0007669"/>
    <property type="project" value="UniProtKB-KW"/>
</dbReference>
<dbReference type="GO" id="GO:0009252">
    <property type="term" value="P:peptidoglycan biosynthetic process"/>
    <property type="evidence" value="ECO:0007669"/>
    <property type="project" value="UniProtKB-KW"/>
</dbReference>
<dbReference type="GO" id="GO:0008360">
    <property type="term" value="P:regulation of cell shape"/>
    <property type="evidence" value="ECO:0007669"/>
    <property type="project" value="UniProtKB-KW"/>
</dbReference>
<dbReference type="GO" id="GO:0046677">
    <property type="term" value="P:response to antibiotic"/>
    <property type="evidence" value="ECO:0007669"/>
    <property type="project" value="UniProtKB-KW"/>
</dbReference>
<dbReference type="Gene3D" id="1.20.58.90">
    <property type="match status" value="1"/>
</dbReference>
<dbReference type="Gene3D" id="3.40.630.30">
    <property type="match status" value="2"/>
</dbReference>
<dbReference type="InterPro" id="IPR016181">
    <property type="entry name" value="Acyl_CoA_acyltransferase"/>
</dbReference>
<dbReference type="InterPro" id="IPR003447">
    <property type="entry name" value="FEMABX"/>
</dbReference>
<dbReference type="InterPro" id="IPR050644">
    <property type="entry name" value="PG_Glycine_Bridge_Synth"/>
</dbReference>
<dbReference type="PANTHER" id="PTHR36174:SF2">
    <property type="entry name" value="AMINOACYLTRANSFERASE FEMA"/>
    <property type="match status" value="1"/>
</dbReference>
<dbReference type="PANTHER" id="PTHR36174">
    <property type="entry name" value="LIPID II:GLYCINE GLYCYLTRANSFERASE"/>
    <property type="match status" value="1"/>
</dbReference>
<dbReference type="Pfam" id="PF02388">
    <property type="entry name" value="FemAB"/>
    <property type="match status" value="1"/>
</dbReference>
<dbReference type="SUPFAM" id="SSF55729">
    <property type="entry name" value="Acyl-CoA N-acyltransferases (Nat)"/>
    <property type="match status" value="2"/>
</dbReference>
<dbReference type="PROSITE" id="PS51191">
    <property type="entry name" value="FEMABX"/>
    <property type="match status" value="1"/>
</dbReference>
<keyword id="KW-0012">Acyltransferase</keyword>
<keyword id="KW-0046">Antibiotic resistance</keyword>
<keyword id="KW-0133">Cell shape</keyword>
<keyword id="KW-0961">Cell wall biogenesis/degradation</keyword>
<keyword id="KW-0963">Cytoplasm</keyword>
<keyword id="KW-0573">Peptidoglycan synthesis</keyword>
<keyword id="KW-0808">Transferase</keyword>
<protein>
    <recommendedName>
        <fullName>Aminoacyltransferase FemB</fullName>
        <ecNumber>2.3.2.18</ecNumber>
    </recommendedName>
    <alternativeName>
        <fullName>Factor essential for expression of methicillin resistance B</fullName>
    </alternativeName>
    <alternativeName>
        <fullName>N-acetylmuramoyl-L-alanyl-D-glutamyl-L-lysyl-(N6-triglycine)-D-alanyl-D-alanine-diphosphoundecaprenyl-N-acetylglucosamine:glycine glycyltransferase</fullName>
    </alternativeName>
</protein>
<gene>
    <name type="primary">femB</name>
    <name type="ordered locus">SAV1375</name>
</gene>
<feature type="chain" id="PRO_0000204739" description="Aminoacyltransferase FemB">
    <location>
        <begin position="1"/>
        <end position="419"/>
    </location>
</feature>
<sequence>MKFTELTVTEFDNFVQNPSLESHYFQVKENIVTRENDGFEVVLLGIKDDNNKVIAASLFSKIPTMGSYVYYSNRGPVMDFSDLGLVDYYLKELDKYLQQHQCLYVKLDPYWLYHLYDKDIVPFEGREKNDALVNLFKSHGYEHHGFTTEYDTSSQVRWMGVLNLEGKTPETLKKTFDSQRKRNINKAINYGVKVRFLERDEFNLFLDLYRETEERAGFVSKTDDYFYNFIDTYGDKVLVPLAYIDLDEYVLKLQQELNDKENRRDQMMAKENKSDKQMKKIAELDKQIDHDQHELLNASELSKTDGPILNLASGVYFANAYEVNYFSGGSSEKYNQFMGPYMMHWFMINYCFDNGYDRYNFYGLSGDFTENSEDYGVYRFKRGFNVQIEELIGDFYKPIHKVKYWLFTTLDKLRKKLKK</sequence>
<proteinExistence type="inferred from homology"/>
<evidence type="ECO:0000250" key="1"/>
<evidence type="ECO:0000305" key="2"/>
<reference key="1">
    <citation type="journal article" date="2001" name="Lancet">
        <title>Whole genome sequencing of meticillin-resistant Staphylococcus aureus.</title>
        <authorList>
            <person name="Kuroda M."/>
            <person name="Ohta T."/>
            <person name="Uchiyama I."/>
            <person name="Baba T."/>
            <person name="Yuzawa H."/>
            <person name="Kobayashi I."/>
            <person name="Cui L."/>
            <person name="Oguchi A."/>
            <person name="Aoki K."/>
            <person name="Nagai Y."/>
            <person name="Lian J.-Q."/>
            <person name="Ito T."/>
            <person name="Kanamori M."/>
            <person name="Matsumaru H."/>
            <person name="Maruyama A."/>
            <person name="Murakami H."/>
            <person name="Hosoyama A."/>
            <person name="Mizutani-Ui Y."/>
            <person name="Takahashi N.K."/>
            <person name="Sawano T."/>
            <person name="Inoue R."/>
            <person name="Kaito C."/>
            <person name="Sekimizu K."/>
            <person name="Hirakawa H."/>
            <person name="Kuhara S."/>
            <person name="Goto S."/>
            <person name="Yabuzaki J."/>
            <person name="Kanehisa M."/>
            <person name="Yamashita A."/>
            <person name="Oshima K."/>
            <person name="Furuya K."/>
            <person name="Yoshino C."/>
            <person name="Shiba T."/>
            <person name="Hattori M."/>
            <person name="Ogasawara N."/>
            <person name="Hayashi H."/>
            <person name="Hiramatsu K."/>
        </authorList>
    </citation>
    <scope>NUCLEOTIDE SEQUENCE [LARGE SCALE GENOMIC DNA]</scope>
    <source>
        <strain>Mu50 / ATCC 700699</strain>
    </source>
</reference>
<organism>
    <name type="scientific">Staphylococcus aureus (strain Mu50 / ATCC 700699)</name>
    <dbReference type="NCBI Taxonomy" id="158878"/>
    <lineage>
        <taxon>Bacteria</taxon>
        <taxon>Bacillati</taxon>
        <taxon>Bacillota</taxon>
        <taxon>Bacilli</taxon>
        <taxon>Bacillales</taxon>
        <taxon>Staphylococcaceae</taxon>
        <taxon>Staphylococcus</taxon>
    </lineage>
</organism>
<comment type="function">
    <text evidence="1">Catalyzes the formation of the pentaglycine interpeptide bridge, which is characteristic of the S.aureus peptidoglycan. Adds glycines 4 and 5 of the pentaglycine bridge, using glycyl-tRNA(Gly) as donor. Involved in resistance to methicillin (By similarity).</text>
</comment>
<comment type="catalytic activity">
    <reaction>
        <text>MurNAc-L-Ala-D-isoglutaminyl-L-Lys-(N(6)-tri-Gly)-D-Ala-D-Ala-diphospho-di-trans,octa-cis-undecaprenyl-GlcNAc + 2 glycyl-tRNA(Gly) = MurNAc-L-Ala-D-isoglutaminyl-L-Lys-(N(6)-penta-Gly)-D-Ala-D-Ala-diphospho-di-trans,octa-cis-undecaprenyl-GlcNAc + 2 tRNA(Gly) + 2 H(+)</text>
        <dbReference type="Rhea" id="RHEA:30443"/>
        <dbReference type="Rhea" id="RHEA-COMP:9664"/>
        <dbReference type="Rhea" id="RHEA-COMP:9683"/>
        <dbReference type="ChEBI" id="CHEBI:15378"/>
        <dbReference type="ChEBI" id="CHEBI:62235"/>
        <dbReference type="ChEBI" id="CHEBI:62236"/>
        <dbReference type="ChEBI" id="CHEBI:78442"/>
        <dbReference type="ChEBI" id="CHEBI:78522"/>
        <dbReference type="EC" id="2.3.2.18"/>
    </reaction>
</comment>
<comment type="subunit">
    <text evidence="1">Homodimer. Interacts with FemA (By similarity).</text>
</comment>
<comment type="subcellular location">
    <subcellularLocation>
        <location evidence="1">Cytoplasm</location>
    </subcellularLocation>
</comment>
<comment type="similarity">
    <text evidence="2">Belongs to the FemABX family.</text>
</comment>
<accession>P0A0A6</accession>
<accession>P14305</accession>
<name>FEMB_STAAM</name>